<comment type="function">
    <text evidence="1">Essential component of the cytosolic iron-sulfur (Fe/S) protein assembly machinery. Required for the maturation of extramitochondrial Fe/S proteins.</text>
</comment>
<comment type="similarity">
    <text evidence="1">Belongs to the WD repeat CIA1 family.</text>
</comment>
<protein>
    <recommendedName>
        <fullName evidence="1">Probable cytosolic iron-sulfur protein assembly protein 1</fullName>
    </recommendedName>
</protein>
<proteinExistence type="inferred from homology"/>
<gene>
    <name type="primary">cia1</name>
    <name type="ORF">B8B20.360</name>
    <name type="ORF">NCU05426</name>
</gene>
<name>CIAO1_NEUCR</name>
<sequence>MATETTTATPTAPSATTAEITPLPAFSPDLYQRAWASIPHPSLPLIATCHAHSVTVFSLSTLSKHSVLTGGHTRSVRSAAWQPPRGKVSGKEAKRLRLVTGSFDTTAGVWTWDQGRREESLEREIRLQSGENDQEAEEEEEAEDEWELTLVLEGHENEVKSVNYSPSGQYLATCSRDKSVWIWEDVGNPNPSSEEEDEEEEDEDEWETVAVLQEHDGDVKAVAWCPDVPGRKGKYAPPRRYGDDVLASASYDNTVRLWREDGDGEWVCVAVLEGHEGTVWGVAWEGRPRENDKFPRLLSWGADEVIRVWSLKEPEEEEHGEGAAGGGGNNTWGFGVPNTMRRSLKEEWECTAVLPKVHKGDIYSVAWSTETGLLSSVGSDGVLALYQETANTTEKNEENETNGEAPTTTSAGGWKVLTTVKGAHGPYEINHITWCKRYDAGSERKGEEEMLVTTGDDGVVRPWQVRIQ</sequence>
<keyword id="KW-1185">Reference proteome</keyword>
<keyword id="KW-0677">Repeat</keyword>
<keyword id="KW-0853">WD repeat</keyword>
<feature type="chain" id="PRO_0000382521" description="Probable cytosolic iron-sulfur protein assembly protein 1">
    <location>
        <begin position="1"/>
        <end position="468"/>
    </location>
</feature>
<feature type="repeat" description="WD 1">
    <location>
        <begin position="71"/>
        <end position="122"/>
    </location>
</feature>
<feature type="repeat" description="WD 2">
    <location>
        <begin position="154"/>
        <end position="193"/>
    </location>
</feature>
<feature type="repeat" description="WD 3">
    <location>
        <begin position="214"/>
        <end position="268"/>
    </location>
</feature>
<feature type="repeat" description="WD 4">
    <location>
        <begin position="274"/>
        <end position="319"/>
    </location>
</feature>
<feature type="repeat" description="WD 5">
    <location>
        <begin position="357"/>
        <end position="396"/>
    </location>
</feature>
<feature type="repeat" description="WD 6">
    <location>
        <begin position="423"/>
        <end position="468"/>
    </location>
</feature>
<feature type="region of interest" description="Disordered" evidence="2">
    <location>
        <begin position="185"/>
        <end position="204"/>
    </location>
</feature>
<feature type="region of interest" description="Disordered" evidence="2">
    <location>
        <begin position="314"/>
        <end position="335"/>
    </location>
</feature>
<feature type="region of interest" description="Disordered" evidence="2">
    <location>
        <begin position="391"/>
        <end position="411"/>
    </location>
</feature>
<feature type="compositionally biased region" description="Acidic residues" evidence="2">
    <location>
        <begin position="193"/>
        <end position="204"/>
    </location>
</feature>
<organism>
    <name type="scientific">Neurospora crassa (strain ATCC 24698 / 74-OR23-1A / CBS 708.71 / DSM 1257 / FGSC 987)</name>
    <dbReference type="NCBI Taxonomy" id="367110"/>
    <lineage>
        <taxon>Eukaryota</taxon>
        <taxon>Fungi</taxon>
        <taxon>Dikarya</taxon>
        <taxon>Ascomycota</taxon>
        <taxon>Pezizomycotina</taxon>
        <taxon>Sordariomycetes</taxon>
        <taxon>Sordariomycetidae</taxon>
        <taxon>Sordariales</taxon>
        <taxon>Sordariaceae</taxon>
        <taxon>Neurospora</taxon>
    </lineage>
</organism>
<reference key="1">
    <citation type="journal article" date="2003" name="Nucleic Acids Res.">
        <title>What's in the genome of a filamentous fungus? Analysis of the Neurospora genome sequence.</title>
        <authorList>
            <person name="Mannhaupt G."/>
            <person name="Montrone C."/>
            <person name="Haase D."/>
            <person name="Mewes H.-W."/>
            <person name="Aign V."/>
            <person name="Hoheisel J.D."/>
            <person name="Fartmann B."/>
            <person name="Nyakatura G."/>
            <person name="Kempken F."/>
            <person name="Maier J."/>
            <person name="Schulte U."/>
        </authorList>
    </citation>
    <scope>NUCLEOTIDE SEQUENCE [LARGE SCALE GENOMIC DNA]</scope>
    <source>
        <strain>ATCC 24698 / 74-OR23-1A / CBS 708.71 / DSM 1257 / FGSC 987</strain>
    </source>
</reference>
<reference key="2">
    <citation type="journal article" date="2003" name="Nature">
        <title>The genome sequence of the filamentous fungus Neurospora crassa.</title>
        <authorList>
            <person name="Galagan J.E."/>
            <person name="Calvo S.E."/>
            <person name="Borkovich K.A."/>
            <person name="Selker E.U."/>
            <person name="Read N.D."/>
            <person name="Jaffe D.B."/>
            <person name="FitzHugh W."/>
            <person name="Ma L.-J."/>
            <person name="Smirnov S."/>
            <person name="Purcell S."/>
            <person name="Rehman B."/>
            <person name="Elkins T."/>
            <person name="Engels R."/>
            <person name="Wang S."/>
            <person name="Nielsen C.B."/>
            <person name="Butler J."/>
            <person name="Endrizzi M."/>
            <person name="Qui D."/>
            <person name="Ianakiev P."/>
            <person name="Bell-Pedersen D."/>
            <person name="Nelson M.A."/>
            <person name="Werner-Washburne M."/>
            <person name="Selitrennikoff C.P."/>
            <person name="Kinsey J.A."/>
            <person name="Braun E.L."/>
            <person name="Zelter A."/>
            <person name="Schulte U."/>
            <person name="Kothe G.O."/>
            <person name="Jedd G."/>
            <person name="Mewes H.-W."/>
            <person name="Staben C."/>
            <person name="Marcotte E."/>
            <person name="Greenberg D."/>
            <person name="Roy A."/>
            <person name="Foley K."/>
            <person name="Naylor J."/>
            <person name="Stange-Thomann N."/>
            <person name="Barrett R."/>
            <person name="Gnerre S."/>
            <person name="Kamal M."/>
            <person name="Kamvysselis M."/>
            <person name="Mauceli E.W."/>
            <person name="Bielke C."/>
            <person name="Rudd S."/>
            <person name="Frishman D."/>
            <person name="Krystofova S."/>
            <person name="Rasmussen C."/>
            <person name="Metzenberg R.L."/>
            <person name="Perkins D.D."/>
            <person name="Kroken S."/>
            <person name="Cogoni C."/>
            <person name="Macino G."/>
            <person name="Catcheside D.E.A."/>
            <person name="Li W."/>
            <person name="Pratt R.J."/>
            <person name="Osmani S.A."/>
            <person name="DeSouza C.P.C."/>
            <person name="Glass N.L."/>
            <person name="Orbach M.J."/>
            <person name="Berglund J.A."/>
            <person name="Voelker R."/>
            <person name="Yarden O."/>
            <person name="Plamann M."/>
            <person name="Seiler S."/>
            <person name="Dunlap J.C."/>
            <person name="Radford A."/>
            <person name="Aramayo R."/>
            <person name="Natvig D.O."/>
            <person name="Alex L.A."/>
            <person name="Mannhaupt G."/>
            <person name="Ebbole D.J."/>
            <person name="Freitag M."/>
            <person name="Paulsen I."/>
            <person name="Sachs M.S."/>
            <person name="Lander E.S."/>
            <person name="Nusbaum C."/>
            <person name="Birren B.W."/>
        </authorList>
    </citation>
    <scope>NUCLEOTIDE SEQUENCE [LARGE SCALE GENOMIC DNA]</scope>
    <source>
        <strain>ATCC 24698 / 74-OR23-1A / CBS 708.71 / DSM 1257 / FGSC 987</strain>
    </source>
</reference>
<accession>Q9P5P0</accession>
<evidence type="ECO:0000255" key="1">
    <source>
        <dbReference type="HAMAP-Rule" id="MF_03037"/>
    </source>
</evidence>
<evidence type="ECO:0000256" key="2">
    <source>
        <dbReference type="SAM" id="MobiDB-lite"/>
    </source>
</evidence>
<dbReference type="EMBL" id="AL355933">
    <property type="protein sequence ID" value="CAB91483.1"/>
    <property type="molecule type" value="Genomic_DNA"/>
</dbReference>
<dbReference type="EMBL" id="CM002237">
    <property type="protein sequence ID" value="EAA34013.1"/>
    <property type="molecule type" value="Genomic_DNA"/>
</dbReference>
<dbReference type="PIR" id="T49682">
    <property type="entry name" value="T49682"/>
</dbReference>
<dbReference type="RefSeq" id="XP_963249.1">
    <property type="nucleotide sequence ID" value="XM_958156.2"/>
</dbReference>
<dbReference type="SMR" id="Q9P5P0"/>
<dbReference type="STRING" id="367110.Q9P5P0"/>
<dbReference type="PaxDb" id="5141-EFNCRP00000006578"/>
<dbReference type="EnsemblFungi" id="EAA34013">
    <property type="protein sequence ID" value="EAA34013"/>
    <property type="gene ID" value="NCU05426"/>
</dbReference>
<dbReference type="GeneID" id="3879397"/>
<dbReference type="KEGG" id="ncr:NCU05426"/>
<dbReference type="VEuPathDB" id="FungiDB:NCU05426"/>
<dbReference type="HOGENOM" id="CLU_000288_57_8_1"/>
<dbReference type="InParanoid" id="Q9P5P0"/>
<dbReference type="OMA" id="IREIRWS"/>
<dbReference type="OrthoDB" id="284782at2759"/>
<dbReference type="Proteomes" id="UP000001805">
    <property type="component" value="Chromosome 6, Linkage Group II"/>
</dbReference>
<dbReference type="GO" id="GO:0097361">
    <property type="term" value="C:cytosolic [4Fe-4S] assembly targeting complex"/>
    <property type="evidence" value="ECO:0000318"/>
    <property type="project" value="GO_Central"/>
</dbReference>
<dbReference type="GO" id="GO:0016226">
    <property type="term" value="P:iron-sulfur cluster assembly"/>
    <property type="evidence" value="ECO:0000318"/>
    <property type="project" value="GO_Central"/>
</dbReference>
<dbReference type="FunFam" id="2.130.10.10:FF:000816">
    <property type="entry name" value="Probable cytosolic iron-sulfur protein assembly protein 1"/>
    <property type="match status" value="1"/>
</dbReference>
<dbReference type="Gene3D" id="2.130.10.10">
    <property type="entry name" value="YVTN repeat-like/Quinoprotein amine dehydrogenase"/>
    <property type="match status" value="1"/>
</dbReference>
<dbReference type="HAMAP" id="MF_03037">
    <property type="entry name" value="ciao1"/>
    <property type="match status" value="1"/>
</dbReference>
<dbReference type="InterPro" id="IPR028608">
    <property type="entry name" value="CIAO1/Cia1"/>
</dbReference>
<dbReference type="InterPro" id="IPR015943">
    <property type="entry name" value="WD40/YVTN_repeat-like_dom_sf"/>
</dbReference>
<dbReference type="InterPro" id="IPR036322">
    <property type="entry name" value="WD40_repeat_dom_sf"/>
</dbReference>
<dbReference type="InterPro" id="IPR001680">
    <property type="entry name" value="WD40_rpt"/>
</dbReference>
<dbReference type="PANTHER" id="PTHR19920:SF0">
    <property type="entry name" value="CYTOSOLIC IRON-SULFUR PROTEIN ASSEMBLY PROTEIN CIAO1-RELATED"/>
    <property type="match status" value="1"/>
</dbReference>
<dbReference type="PANTHER" id="PTHR19920">
    <property type="entry name" value="WD40 PROTEIN CIAO1"/>
    <property type="match status" value="1"/>
</dbReference>
<dbReference type="Pfam" id="PF00400">
    <property type="entry name" value="WD40"/>
    <property type="match status" value="4"/>
</dbReference>
<dbReference type="SMART" id="SM00320">
    <property type="entry name" value="WD40"/>
    <property type="match status" value="6"/>
</dbReference>
<dbReference type="SUPFAM" id="SSF50978">
    <property type="entry name" value="WD40 repeat-like"/>
    <property type="match status" value="1"/>
</dbReference>
<dbReference type="PROSITE" id="PS50082">
    <property type="entry name" value="WD_REPEATS_2"/>
    <property type="match status" value="1"/>
</dbReference>
<dbReference type="PROSITE" id="PS50294">
    <property type="entry name" value="WD_REPEATS_REGION"/>
    <property type="match status" value="1"/>
</dbReference>